<organism>
    <name type="scientific">Helianthus annuus</name>
    <name type="common">Common sunflower</name>
    <dbReference type="NCBI Taxonomy" id="4232"/>
    <lineage>
        <taxon>Eukaryota</taxon>
        <taxon>Viridiplantae</taxon>
        <taxon>Streptophyta</taxon>
        <taxon>Embryophyta</taxon>
        <taxon>Tracheophyta</taxon>
        <taxon>Spermatophyta</taxon>
        <taxon>Magnoliopsida</taxon>
        <taxon>eudicotyledons</taxon>
        <taxon>Gunneridae</taxon>
        <taxon>Pentapetalae</taxon>
        <taxon>asterids</taxon>
        <taxon>campanulids</taxon>
        <taxon>Asterales</taxon>
        <taxon>Asteraceae</taxon>
        <taxon>Asteroideae</taxon>
        <taxon>Heliantheae alliance</taxon>
        <taxon>Heliantheae</taxon>
        <taxon>Helianthus</taxon>
    </lineage>
</organism>
<comment type="function">
    <text evidence="1">NDH shuttles electrons from NAD(P)H:plastoquinone, via FMN and iron-sulfur (Fe-S) centers, to quinones in the photosynthetic chain and possibly in a chloroplast respiratory chain. The immediate electron acceptor for the enzyme in this species is believed to be plastoquinone. Couples the redox reaction to proton translocation, and thus conserves the redox energy in a proton gradient.</text>
</comment>
<comment type="catalytic activity">
    <reaction evidence="1">
        <text>a plastoquinone + NADH + (n+1) H(+)(in) = a plastoquinol + NAD(+) + n H(+)(out)</text>
        <dbReference type="Rhea" id="RHEA:42608"/>
        <dbReference type="Rhea" id="RHEA-COMP:9561"/>
        <dbReference type="Rhea" id="RHEA-COMP:9562"/>
        <dbReference type="ChEBI" id="CHEBI:15378"/>
        <dbReference type="ChEBI" id="CHEBI:17757"/>
        <dbReference type="ChEBI" id="CHEBI:57540"/>
        <dbReference type="ChEBI" id="CHEBI:57945"/>
        <dbReference type="ChEBI" id="CHEBI:62192"/>
    </reaction>
</comment>
<comment type="catalytic activity">
    <reaction evidence="1">
        <text>a plastoquinone + NADPH + (n+1) H(+)(in) = a plastoquinol + NADP(+) + n H(+)(out)</text>
        <dbReference type="Rhea" id="RHEA:42612"/>
        <dbReference type="Rhea" id="RHEA-COMP:9561"/>
        <dbReference type="Rhea" id="RHEA-COMP:9562"/>
        <dbReference type="ChEBI" id="CHEBI:15378"/>
        <dbReference type="ChEBI" id="CHEBI:17757"/>
        <dbReference type="ChEBI" id="CHEBI:57783"/>
        <dbReference type="ChEBI" id="CHEBI:58349"/>
        <dbReference type="ChEBI" id="CHEBI:62192"/>
    </reaction>
</comment>
<comment type="cofactor">
    <cofactor evidence="1">
        <name>[4Fe-4S] cluster</name>
        <dbReference type="ChEBI" id="CHEBI:49883"/>
    </cofactor>
    <text evidence="1">Binds 2 [4Fe-4S] clusters per subunit.</text>
</comment>
<comment type="subunit">
    <text evidence="1">NDH is composed of at least 16 different subunits, 5 of which are encoded in the nucleus.</text>
</comment>
<comment type="subcellular location">
    <subcellularLocation>
        <location evidence="1">Plastid</location>
        <location evidence="1">Chloroplast thylakoid membrane</location>
        <topology evidence="1">Peripheral membrane protein</topology>
    </subcellularLocation>
</comment>
<comment type="similarity">
    <text evidence="1">Belongs to the complex I 23 kDa subunit family.</text>
</comment>
<evidence type="ECO:0000255" key="1">
    <source>
        <dbReference type="HAMAP-Rule" id="MF_01351"/>
    </source>
</evidence>
<reference key="1">
    <citation type="submission" date="2003-01" db="EMBL/GenBank/DDBJ databases">
        <title>Chloroplast DNA phylogeny of tribe Heliantheae (Asteraceae).</title>
        <authorList>
            <person name="Panero J.L."/>
            <person name="Baldwin B.G."/>
            <person name="Schilling E.E."/>
            <person name="Clevinger J.A."/>
        </authorList>
    </citation>
    <scope>NUCLEOTIDE SEQUENCE [GENOMIC DNA]</scope>
    <source>
        <strain>cv. Mammoth Russian</strain>
        <tissue>Seed</tissue>
    </source>
</reference>
<reference key="2">
    <citation type="submission" date="2006-01" db="EMBL/GenBank/DDBJ databases">
        <title>A comparison of the first two published chloroplast genomes in Asteraceae: Lactuca and Helianthus.</title>
        <authorList>
            <person name="Timme R.E."/>
            <person name="Kuehl J.V."/>
            <person name="Boore J.L."/>
            <person name="Jansen R.K."/>
        </authorList>
    </citation>
    <scope>NUCLEOTIDE SEQUENCE [LARGE SCALE GENOMIC DNA]</scope>
    <source>
        <strain>cv. HA383</strain>
    </source>
</reference>
<geneLocation type="chloroplast"/>
<sequence>MFPMVTEFMNYGQQTVRAARYIGQGFMITLSHANRLPVTIQYPYEKLITSERFRGRIHFEFDKCIACEVCVRVCPIDLPVVDWKLETDIRKKRLLNYSIDFGICIFCGNCVEYCPTNCLSMTEEYELSTYDRHELNYNQIALGRLPMSIIDDYTIRTILNLPEIKT</sequence>
<name>NDHI_HELAN</name>
<accession>Q8HVR7</accession>
<dbReference type="EC" id="7.1.1.-" evidence="1"/>
<dbReference type="EMBL" id="AF383796">
    <property type="protein sequence ID" value="AAN61737.1"/>
    <property type="molecule type" value="Genomic_DNA"/>
</dbReference>
<dbReference type="EMBL" id="DQ383815">
    <property type="protein sequence ID" value="ABD47197.1"/>
    <property type="molecule type" value="Genomic_DNA"/>
</dbReference>
<dbReference type="RefSeq" id="YP_588169.1">
    <property type="nucleotide sequence ID" value="NC_007977.1"/>
</dbReference>
<dbReference type="SMR" id="Q8HVR7"/>
<dbReference type="GeneID" id="4055623"/>
<dbReference type="KEGG" id="han:4055623"/>
<dbReference type="OrthoDB" id="24758at2759"/>
<dbReference type="PhylomeDB" id="Q8HVR7"/>
<dbReference type="GO" id="GO:0009535">
    <property type="term" value="C:chloroplast thylakoid membrane"/>
    <property type="evidence" value="ECO:0007669"/>
    <property type="project" value="UniProtKB-SubCell"/>
</dbReference>
<dbReference type="GO" id="GO:0051539">
    <property type="term" value="F:4 iron, 4 sulfur cluster binding"/>
    <property type="evidence" value="ECO:0007669"/>
    <property type="project" value="UniProtKB-KW"/>
</dbReference>
<dbReference type="GO" id="GO:0005506">
    <property type="term" value="F:iron ion binding"/>
    <property type="evidence" value="ECO:0007669"/>
    <property type="project" value="UniProtKB-UniRule"/>
</dbReference>
<dbReference type="GO" id="GO:0008137">
    <property type="term" value="F:NADH dehydrogenase (ubiquinone) activity"/>
    <property type="evidence" value="ECO:0007669"/>
    <property type="project" value="InterPro"/>
</dbReference>
<dbReference type="GO" id="GO:0048038">
    <property type="term" value="F:quinone binding"/>
    <property type="evidence" value="ECO:0007669"/>
    <property type="project" value="UniProtKB-KW"/>
</dbReference>
<dbReference type="GO" id="GO:0019684">
    <property type="term" value="P:photosynthesis, light reaction"/>
    <property type="evidence" value="ECO:0007669"/>
    <property type="project" value="UniProtKB-UniRule"/>
</dbReference>
<dbReference type="FunFam" id="3.30.70.3270:FF:000006">
    <property type="entry name" value="NAD(P)H-quinone oxidoreductase subunit I, chloroplastic"/>
    <property type="match status" value="1"/>
</dbReference>
<dbReference type="Gene3D" id="3.30.70.3270">
    <property type="match status" value="1"/>
</dbReference>
<dbReference type="HAMAP" id="MF_01351">
    <property type="entry name" value="NDH1_NuoI"/>
    <property type="match status" value="1"/>
</dbReference>
<dbReference type="InterPro" id="IPR017896">
    <property type="entry name" value="4Fe4S_Fe-S-bd"/>
</dbReference>
<dbReference type="InterPro" id="IPR017900">
    <property type="entry name" value="4Fe4S_Fe_S_CS"/>
</dbReference>
<dbReference type="InterPro" id="IPR010226">
    <property type="entry name" value="NADH_quinone_OxRdtase_chainI"/>
</dbReference>
<dbReference type="InterPro" id="IPR004497">
    <property type="entry name" value="NDHI"/>
</dbReference>
<dbReference type="NCBIfam" id="TIGR00403">
    <property type="entry name" value="ndhI"/>
    <property type="match status" value="1"/>
</dbReference>
<dbReference type="NCBIfam" id="TIGR01971">
    <property type="entry name" value="NuoI"/>
    <property type="match status" value="1"/>
</dbReference>
<dbReference type="NCBIfam" id="NF004537">
    <property type="entry name" value="PRK05888.1-3"/>
    <property type="match status" value="1"/>
</dbReference>
<dbReference type="PANTHER" id="PTHR47275">
    <property type="entry name" value="NAD(P)H-QUINONE OXIDOREDUCTASE SUBUNIT I, CHLOROPLASTIC"/>
    <property type="match status" value="1"/>
</dbReference>
<dbReference type="PANTHER" id="PTHR47275:SF1">
    <property type="entry name" value="NAD(P)H-QUINONE OXIDOREDUCTASE SUBUNIT I, CHLOROPLASTIC"/>
    <property type="match status" value="1"/>
</dbReference>
<dbReference type="Pfam" id="PF00037">
    <property type="entry name" value="Fer4"/>
    <property type="match status" value="2"/>
</dbReference>
<dbReference type="SUPFAM" id="SSF54862">
    <property type="entry name" value="4Fe-4S ferredoxins"/>
    <property type="match status" value="1"/>
</dbReference>
<dbReference type="PROSITE" id="PS00198">
    <property type="entry name" value="4FE4S_FER_1"/>
    <property type="match status" value="2"/>
</dbReference>
<dbReference type="PROSITE" id="PS51379">
    <property type="entry name" value="4FE4S_FER_2"/>
    <property type="match status" value="2"/>
</dbReference>
<feature type="chain" id="PRO_0000250795" description="NAD(P)H-quinone oxidoreductase subunit I, chloroplastic">
    <location>
        <begin position="1"/>
        <end position="166"/>
    </location>
</feature>
<feature type="domain" description="4Fe-4S ferredoxin-type 1" evidence="1">
    <location>
        <begin position="55"/>
        <end position="84"/>
    </location>
</feature>
<feature type="domain" description="4Fe-4S ferredoxin-type 2" evidence="1">
    <location>
        <begin position="95"/>
        <end position="124"/>
    </location>
</feature>
<feature type="binding site" evidence="1">
    <location>
        <position position="64"/>
    </location>
    <ligand>
        <name>[4Fe-4S] cluster</name>
        <dbReference type="ChEBI" id="CHEBI:49883"/>
        <label>1</label>
    </ligand>
</feature>
<feature type="binding site" evidence="1">
    <location>
        <position position="67"/>
    </location>
    <ligand>
        <name>[4Fe-4S] cluster</name>
        <dbReference type="ChEBI" id="CHEBI:49883"/>
        <label>1</label>
    </ligand>
</feature>
<feature type="binding site" evidence="1">
    <location>
        <position position="70"/>
    </location>
    <ligand>
        <name>[4Fe-4S] cluster</name>
        <dbReference type="ChEBI" id="CHEBI:49883"/>
        <label>1</label>
    </ligand>
</feature>
<feature type="binding site" evidence="1">
    <location>
        <position position="74"/>
    </location>
    <ligand>
        <name>[4Fe-4S] cluster</name>
        <dbReference type="ChEBI" id="CHEBI:49883"/>
        <label>2</label>
    </ligand>
</feature>
<feature type="binding site" evidence="1">
    <location>
        <position position="104"/>
    </location>
    <ligand>
        <name>[4Fe-4S] cluster</name>
        <dbReference type="ChEBI" id="CHEBI:49883"/>
        <label>2</label>
    </ligand>
</feature>
<feature type="binding site" evidence="1">
    <location>
        <position position="107"/>
    </location>
    <ligand>
        <name>[4Fe-4S] cluster</name>
        <dbReference type="ChEBI" id="CHEBI:49883"/>
        <label>2</label>
    </ligand>
</feature>
<feature type="binding site" evidence="1">
    <location>
        <position position="110"/>
    </location>
    <ligand>
        <name>[4Fe-4S] cluster</name>
        <dbReference type="ChEBI" id="CHEBI:49883"/>
        <label>2</label>
    </ligand>
</feature>
<feature type="binding site" evidence="1">
    <location>
        <position position="114"/>
    </location>
    <ligand>
        <name>[4Fe-4S] cluster</name>
        <dbReference type="ChEBI" id="CHEBI:49883"/>
        <label>1</label>
    </ligand>
</feature>
<protein>
    <recommendedName>
        <fullName evidence="1">NAD(P)H-quinone oxidoreductase subunit I, chloroplastic</fullName>
        <ecNumber evidence="1">7.1.1.-</ecNumber>
    </recommendedName>
    <alternativeName>
        <fullName evidence="1">NAD(P)H dehydrogenase subunit I</fullName>
        <shortName evidence="1">NDH subunit I</shortName>
    </alternativeName>
    <alternativeName>
        <fullName evidence="1">NADH-plastoquinone oxidoreductase subunit I</fullName>
    </alternativeName>
</protein>
<gene>
    <name evidence="1" type="primary">ndhI</name>
</gene>
<proteinExistence type="inferred from homology"/>
<keyword id="KW-0004">4Fe-4S</keyword>
<keyword id="KW-0150">Chloroplast</keyword>
<keyword id="KW-0408">Iron</keyword>
<keyword id="KW-0411">Iron-sulfur</keyword>
<keyword id="KW-0472">Membrane</keyword>
<keyword id="KW-0479">Metal-binding</keyword>
<keyword id="KW-0520">NAD</keyword>
<keyword id="KW-0521">NADP</keyword>
<keyword id="KW-0934">Plastid</keyword>
<keyword id="KW-0618">Plastoquinone</keyword>
<keyword id="KW-0874">Quinone</keyword>
<keyword id="KW-0677">Repeat</keyword>
<keyword id="KW-0793">Thylakoid</keyword>
<keyword id="KW-1278">Translocase</keyword>